<proteinExistence type="inferred from homology"/>
<evidence type="ECO:0000255" key="1">
    <source>
        <dbReference type="HAMAP-Rule" id="MF_00178"/>
    </source>
</evidence>
<evidence type="ECO:0000256" key="2">
    <source>
        <dbReference type="SAM" id="MobiDB-lite"/>
    </source>
</evidence>
<comment type="function">
    <text evidence="1">Catalyzes the formation of 6,7-dimethyl-8-ribityllumazine by condensation of 5-amino-6-(D-ribitylamino)uracil with 3,4-dihydroxy-2-butanone 4-phosphate. This is the penultimate step in the biosynthesis of riboflavin.</text>
</comment>
<comment type="catalytic activity">
    <reaction evidence="1">
        <text>(2S)-2-hydroxy-3-oxobutyl phosphate + 5-amino-6-(D-ribitylamino)uracil = 6,7-dimethyl-8-(1-D-ribityl)lumazine + phosphate + 2 H2O + H(+)</text>
        <dbReference type="Rhea" id="RHEA:26152"/>
        <dbReference type="ChEBI" id="CHEBI:15377"/>
        <dbReference type="ChEBI" id="CHEBI:15378"/>
        <dbReference type="ChEBI" id="CHEBI:15934"/>
        <dbReference type="ChEBI" id="CHEBI:43474"/>
        <dbReference type="ChEBI" id="CHEBI:58201"/>
        <dbReference type="ChEBI" id="CHEBI:58830"/>
        <dbReference type="EC" id="2.5.1.78"/>
    </reaction>
</comment>
<comment type="pathway">
    <text evidence="1">Cofactor biosynthesis; riboflavin biosynthesis; riboflavin from 2-hydroxy-3-oxobutyl phosphate and 5-amino-6-(D-ribitylamino)uracil: step 1/2.</text>
</comment>
<comment type="similarity">
    <text evidence="1">Belongs to the DMRL synthase family.</text>
</comment>
<sequence>MEIGQYQPNLEGDGLRIGIVQSRFNEPVCNGLADACVEELERLGVTGEDVLLVSVPGALEIPLALQKLAESGQFDALIALGAVIRGETYHFELVSNESGAGITRIGLDFNLPIANAVLTTENDEQAVARMTEKGRDAARVAVEMANLTMALDQLGDDEDEEEDEDDEEERA</sequence>
<feature type="chain" id="PRO_1000098165" description="6,7-dimethyl-8-ribityllumazine synthase">
    <location>
        <begin position="1"/>
        <end position="171"/>
    </location>
</feature>
<feature type="region of interest" description="Disordered" evidence="2">
    <location>
        <begin position="150"/>
        <end position="171"/>
    </location>
</feature>
<feature type="compositionally biased region" description="Acidic residues" evidence="2">
    <location>
        <begin position="154"/>
        <end position="171"/>
    </location>
</feature>
<feature type="active site" description="Proton donor" evidence="1">
    <location>
        <position position="90"/>
    </location>
</feature>
<feature type="binding site" evidence="1">
    <location>
        <position position="24"/>
    </location>
    <ligand>
        <name>5-amino-6-(D-ribitylamino)uracil</name>
        <dbReference type="ChEBI" id="CHEBI:15934"/>
    </ligand>
</feature>
<feature type="binding site" evidence="1">
    <location>
        <begin position="58"/>
        <end position="60"/>
    </location>
    <ligand>
        <name>5-amino-6-(D-ribitylamino)uracil</name>
        <dbReference type="ChEBI" id="CHEBI:15934"/>
    </ligand>
</feature>
<feature type="binding site" evidence="1">
    <location>
        <begin position="82"/>
        <end position="84"/>
    </location>
    <ligand>
        <name>5-amino-6-(D-ribitylamino)uracil</name>
        <dbReference type="ChEBI" id="CHEBI:15934"/>
    </ligand>
</feature>
<feature type="binding site" evidence="1">
    <location>
        <begin position="87"/>
        <end position="88"/>
    </location>
    <ligand>
        <name>(2S)-2-hydroxy-3-oxobutyl phosphate</name>
        <dbReference type="ChEBI" id="CHEBI:58830"/>
    </ligand>
</feature>
<feature type="binding site" evidence="1">
    <location>
        <position position="115"/>
    </location>
    <ligand>
        <name>5-amino-6-(D-ribitylamino)uracil</name>
        <dbReference type="ChEBI" id="CHEBI:15934"/>
    </ligand>
</feature>
<feature type="binding site" evidence="1">
    <location>
        <position position="129"/>
    </location>
    <ligand>
        <name>(2S)-2-hydroxy-3-oxobutyl phosphate</name>
        <dbReference type="ChEBI" id="CHEBI:58830"/>
    </ligand>
</feature>
<reference key="1">
    <citation type="submission" date="2008-02" db="EMBL/GenBank/DDBJ databases">
        <title>Complete sequence of chromosome 1 of Burkholderia cenocepacia MC0-3.</title>
        <authorList>
            <person name="Copeland A."/>
            <person name="Lucas S."/>
            <person name="Lapidus A."/>
            <person name="Barry K."/>
            <person name="Bruce D."/>
            <person name="Goodwin L."/>
            <person name="Glavina del Rio T."/>
            <person name="Dalin E."/>
            <person name="Tice H."/>
            <person name="Pitluck S."/>
            <person name="Chain P."/>
            <person name="Malfatti S."/>
            <person name="Shin M."/>
            <person name="Vergez L."/>
            <person name="Schmutz J."/>
            <person name="Larimer F."/>
            <person name="Land M."/>
            <person name="Hauser L."/>
            <person name="Kyrpides N."/>
            <person name="Mikhailova N."/>
            <person name="Tiedje J."/>
            <person name="Richardson P."/>
        </authorList>
    </citation>
    <scope>NUCLEOTIDE SEQUENCE [LARGE SCALE GENOMIC DNA]</scope>
    <source>
        <strain>MC0-3</strain>
    </source>
</reference>
<accession>B1JX76</accession>
<keyword id="KW-0686">Riboflavin biosynthesis</keyword>
<keyword id="KW-0808">Transferase</keyword>
<gene>
    <name evidence="1" type="primary">ribH</name>
    <name type="ordered locus">Bcenmc03_0918</name>
</gene>
<protein>
    <recommendedName>
        <fullName evidence="1">6,7-dimethyl-8-ribityllumazine synthase</fullName>
        <shortName evidence="1">DMRL synthase</shortName>
        <shortName evidence="1">LS</shortName>
        <shortName evidence="1">Lumazine synthase</shortName>
        <ecNumber evidence="1">2.5.1.78</ecNumber>
    </recommendedName>
</protein>
<organism>
    <name type="scientific">Burkholderia orbicola (strain MC0-3)</name>
    <dbReference type="NCBI Taxonomy" id="406425"/>
    <lineage>
        <taxon>Bacteria</taxon>
        <taxon>Pseudomonadati</taxon>
        <taxon>Pseudomonadota</taxon>
        <taxon>Betaproteobacteria</taxon>
        <taxon>Burkholderiales</taxon>
        <taxon>Burkholderiaceae</taxon>
        <taxon>Burkholderia</taxon>
        <taxon>Burkholderia cepacia complex</taxon>
        <taxon>Burkholderia orbicola</taxon>
    </lineage>
</organism>
<dbReference type="EC" id="2.5.1.78" evidence="1"/>
<dbReference type="EMBL" id="CP000958">
    <property type="protein sequence ID" value="ACA90095.1"/>
    <property type="molecule type" value="Genomic_DNA"/>
</dbReference>
<dbReference type="RefSeq" id="WP_006476661.1">
    <property type="nucleotide sequence ID" value="NC_010508.1"/>
</dbReference>
<dbReference type="SMR" id="B1JX76"/>
<dbReference type="GeneID" id="83047708"/>
<dbReference type="KEGG" id="bcm:Bcenmc03_0918"/>
<dbReference type="HOGENOM" id="CLU_089358_1_2_4"/>
<dbReference type="UniPathway" id="UPA00275">
    <property type="reaction ID" value="UER00404"/>
</dbReference>
<dbReference type="Proteomes" id="UP000002169">
    <property type="component" value="Chromosome 1"/>
</dbReference>
<dbReference type="GO" id="GO:0005829">
    <property type="term" value="C:cytosol"/>
    <property type="evidence" value="ECO:0007669"/>
    <property type="project" value="TreeGrafter"/>
</dbReference>
<dbReference type="GO" id="GO:0009349">
    <property type="term" value="C:riboflavin synthase complex"/>
    <property type="evidence" value="ECO:0007669"/>
    <property type="project" value="InterPro"/>
</dbReference>
<dbReference type="GO" id="GO:0000906">
    <property type="term" value="F:6,7-dimethyl-8-ribityllumazine synthase activity"/>
    <property type="evidence" value="ECO:0007669"/>
    <property type="project" value="UniProtKB-UniRule"/>
</dbReference>
<dbReference type="GO" id="GO:0009231">
    <property type="term" value="P:riboflavin biosynthetic process"/>
    <property type="evidence" value="ECO:0007669"/>
    <property type="project" value="UniProtKB-UniRule"/>
</dbReference>
<dbReference type="CDD" id="cd09209">
    <property type="entry name" value="Lumazine_synthase-I"/>
    <property type="match status" value="1"/>
</dbReference>
<dbReference type="Gene3D" id="3.40.50.960">
    <property type="entry name" value="Lumazine/riboflavin synthase"/>
    <property type="match status" value="1"/>
</dbReference>
<dbReference type="HAMAP" id="MF_00178">
    <property type="entry name" value="Lumazine_synth"/>
    <property type="match status" value="1"/>
</dbReference>
<dbReference type="InterPro" id="IPR034964">
    <property type="entry name" value="LS"/>
</dbReference>
<dbReference type="InterPro" id="IPR002180">
    <property type="entry name" value="LS/RS"/>
</dbReference>
<dbReference type="InterPro" id="IPR036467">
    <property type="entry name" value="LS/RS_sf"/>
</dbReference>
<dbReference type="NCBIfam" id="TIGR00114">
    <property type="entry name" value="lumazine-synth"/>
    <property type="match status" value="1"/>
</dbReference>
<dbReference type="PANTHER" id="PTHR21058:SF0">
    <property type="entry name" value="6,7-DIMETHYL-8-RIBITYLLUMAZINE SYNTHASE"/>
    <property type="match status" value="1"/>
</dbReference>
<dbReference type="PANTHER" id="PTHR21058">
    <property type="entry name" value="6,7-DIMETHYL-8-RIBITYLLUMAZINE SYNTHASE DMRL SYNTHASE LUMAZINE SYNTHASE"/>
    <property type="match status" value="1"/>
</dbReference>
<dbReference type="Pfam" id="PF00885">
    <property type="entry name" value="DMRL_synthase"/>
    <property type="match status" value="1"/>
</dbReference>
<dbReference type="SUPFAM" id="SSF52121">
    <property type="entry name" value="Lumazine synthase"/>
    <property type="match status" value="1"/>
</dbReference>
<name>RISB_BURO0</name>